<name>PDRP_BARQU</name>
<proteinExistence type="inferred from homology"/>
<protein>
    <recommendedName>
        <fullName evidence="1">Putative pyruvate, phosphate dikinase regulatory protein</fullName>
        <shortName evidence="1">PPDK regulatory protein</shortName>
        <ecNumber evidence="1">2.7.11.32</ecNumber>
        <ecNumber evidence="1">2.7.4.27</ecNumber>
    </recommendedName>
</protein>
<sequence length="280" mass="31628">MIREKKSFHLHMLSDATGETLISVGRAVASQYATSQVTEHIYPMIRNETQLRRALDEIQQELGIVLYTIIDKKIKLLLKKRCEKMEVPCIDILHPVLDAFQSYLGTPTNLRVSAQHDLNADYFRRIEALDFTIEHDDGKSPKGLSDADVILVGISRTSKTPTSIYLANRGIKTANVPLIPGIGFPEALLEAKNTLIVGLIASAERISHIRQNRDLGHGFAVESYTDRISIAEELIYAKRICERFGWPVIDVTRRSIEETAAAIFELLSWFREGKWKKNPS</sequence>
<organism>
    <name type="scientific">Bartonella quintana (strain Toulouse)</name>
    <name type="common">Rochalimaea quintana</name>
    <dbReference type="NCBI Taxonomy" id="283165"/>
    <lineage>
        <taxon>Bacteria</taxon>
        <taxon>Pseudomonadati</taxon>
        <taxon>Pseudomonadota</taxon>
        <taxon>Alphaproteobacteria</taxon>
        <taxon>Hyphomicrobiales</taxon>
        <taxon>Bartonellaceae</taxon>
        <taxon>Bartonella</taxon>
    </lineage>
</organism>
<dbReference type="EC" id="2.7.11.32" evidence="1"/>
<dbReference type="EC" id="2.7.4.27" evidence="1"/>
<dbReference type="EMBL" id="BX897700">
    <property type="protein sequence ID" value="CAF25508.1"/>
    <property type="molecule type" value="Genomic_DNA"/>
</dbReference>
<dbReference type="RefSeq" id="WP_011178840.1">
    <property type="nucleotide sequence ID" value="NC_005955.1"/>
</dbReference>
<dbReference type="SMR" id="Q6G1B4"/>
<dbReference type="KEGG" id="bqu:BQ00010"/>
<dbReference type="eggNOG" id="COG1806">
    <property type="taxonomic scope" value="Bacteria"/>
</dbReference>
<dbReference type="HOGENOM" id="CLU_046206_2_0_5"/>
<dbReference type="OrthoDB" id="9782201at2"/>
<dbReference type="Proteomes" id="UP000000597">
    <property type="component" value="Chromosome"/>
</dbReference>
<dbReference type="GO" id="GO:0043531">
    <property type="term" value="F:ADP binding"/>
    <property type="evidence" value="ECO:0007669"/>
    <property type="project" value="UniProtKB-UniRule"/>
</dbReference>
<dbReference type="GO" id="GO:0005524">
    <property type="term" value="F:ATP binding"/>
    <property type="evidence" value="ECO:0007669"/>
    <property type="project" value="InterPro"/>
</dbReference>
<dbReference type="GO" id="GO:0016776">
    <property type="term" value="F:phosphotransferase activity, phosphate group as acceptor"/>
    <property type="evidence" value="ECO:0007669"/>
    <property type="project" value="UniProtKB-UniRule"/>
</dbReference>
<dbReference type="GO" id="GO:0004674">
    <property type="term" value="F:protein serine/threonine kinase activity"/>
    <property type="evidence" value="ECO:0007669"/>
    <property type="project" value="UniProtKB-UniRule"/>
</dbReference>
<dbReference type="HAMAP" id="MF_00921">
    <property type="entry name" value="PDRP"/>
    <property type="match status" value="1"/>
</dbReference>
<dbReference type="InterPro" id="IPR005177">
    <property type="entry name" value="Kinase-pyrophosphorylase"/>
</dbReference>
<dbReference type="InterPro" id="IPR026565">
    <property type="entry name" value="PPDK_reg"/>
</dbReference>
<dbReference type="NCBIfam" id="NF003742">
    <property type="entry name" value="PRK05339.1"/>
    <property type="match status" value="1"/>
</dbReference>
<dbReference type="PANTHER" id="PTHR31756">
    <property type="entry name" value="PYRUVATE, PHOSPHATE DIKINASE REGULATORY PROTEIN 1, CHLOROPLASTIC"/>
    <property type="match status" value="1"/>
</dbReference>
<dbReference type="PANTHER" id="PTHR31756:SF3">
    <property type="entry name" value="PYRUVATE, PHOSPHATE DIKINASE REGULATORY PROTEIN 1, CHLOROPLASTIC"/>
    <property type="match status" value="1"/>
</dbReference>
<dbReference type="Pfam" id="PF03618">
    <property type="entry name" value="Kinase-PPPase"/>
    <property type="match status" value="1"/>
</dbReference>
<evidence type="ECO:0000255" key="1">
    <source>
        <dbReference type="HAMAP-Rule" id="MF_00921"/>
    </source>
</evidence>
<gene>
    <name type="ordered locus">BQ00010</name>
</gene>
<keyword id="KW-0418">Kinase</keyword>
<keyword id="KW-0547">Nucleotide-binding</keyword>
<keyword id="KW-0723">Serine/threonine-protein kinase</keyword>
<keyword id="KW-0808">Transferase</keyword>
<reference key="1">
    <citation type="journal article" date="2004" name="Proc. Natl. Acad. Sci. U.S.A.">
        <title>The louse-borne human pathogen Bartonella quintana is a genomic derivative of the zoonotic agent Bartonella henselae.</title>
        <authorList>
            <person name="Alsmark U.C.M."/>
            <person name="Frank A.C."/>
            <person name="Karlberg E.O."/>
            <person name="Legault B.-A."/>
            <person name="Ardell D.H."/>
            <person name="Canbaeck B."/>
            <person name="Eriksson A.-S."/>
            <person name="Naeslund A.K."/>
            <person name="Handley S.A."/>
            <person name="Huvet M."/>
            <person name="La Scola B."/>
            <person name="Holmberg M."/>
            <person name="Andersson S.G.E."/>
        </authorList>
    </citation>
    <scope>NUCLEOTIDE SEQUENCE [LARGE SCALE GENOMIC DNA]</scope>
    <source>
        <strain>Toulouse</strain>
    </source>
</reference>
<comment type="function">
    <text evidence="1">Bifunctional serine/threonine kinase and phosphorylase involved in the regulation of the pyruvate, phosphate dikinase (PPDK) by catalyzing its phosphorylation/dephosphorylation.</text>
</comment>
<comment type="catalytic activity">
    <reaction evidence="1">
        <text>N(tele)-phospho-L-histidyl/L-threonyl-[pyruvate, phosphate dikinase] + ADP = N(tele)-phospho-L-histidyl/O-phospho-L-threonyl-[pyruvate, phosphate dikinase] + AMP + H(+)</text>
        <dbReference type="Rhea" id="RHEA:43692"/>
        <dbReference type="Rhea" id="RHEA-COMP:10650"/>
        <dbReference type="Rhea" id="RHEA-COMP:10651"/>
        <dbReference type="ChEBI" id="CHEBI:15378"/>
        <dbReference type="ChEBI" id="CHEBI:30013"/>
        <dbReference type="ChEBI" id="CHEBI:61977"/>
        <dbReference type="ChEBI" id="CHEBI:83586"/>
        <dbReference type="ChEBI" id="CHEBI:456215"/>
        <dbReference type="ChEBI" id="CHEBI:456216"/>
        <dbReference type="EC" id="2.7.11.32"/>
    </reaction>
</comment>
<comment type="catalytic activity">
    <reaction evidence="1">
        <text>N(tele)-phospho-L-histidyl/O-phospho-L-threonyl-[pyruvate, phosphate dikinase] + phosphate + H(+) = N(tele)-phospho-L-histidyl/L-threonyl-[pyruvate, phosphate dikinase] + diphosphate</text>
        <dbReference type="Rhea" id="RHEA:43696"/>
        <dbReference type="Rhea" id="RHEA-COMP:10650"/>
        <dbReference type="Rhea" id="RHEA-COMP:10651"/>
        <dbReference type="ChEBI" id="CHEBI:15378"/>
        <dbReference type="ChEBI" id="CHEBI:30013"/>
        <dbReference type="ChEBI" id="CHEBI:33019"/>
        <dbReference type="ChEBI" id="CHEBI:43474"/>
        <dbReference type="ChEBI" id="CHEBI:61977"/>
        <dbReference type="ChEBI" id="CHEBI:83586"/>
        <dbReference type="EC" id="2.7.4.27"/>
    </reaction>
</comment>
<comment type="similarity">
    <text evidence="1">Belongs to the pyruvate, phosphate/water dikinase regulatory protein family. PDRP subfamily.</text>
</comment>
<accession>Q6G1B4</accession>
<feature type="chain" id="PRO_0000196633" description="Putative pyruvate, phosphate dikinase regulatory protein">
    <location>
        <begin position="1"/>
        <end position="280"/>
    </location>
</feature>
<feature type="binding site" evidence="1">
    <location>
        <begin position="153"/>
        <end position="160"/>
    </location>
    <ligand>
        <name>ADP</name>
        <dbReference type="ChEBI" id="CHEBI:456216"/>
    </ligand>
</feature>